<comment type="function">
    <text evidence="1">Succinyl-CoA synthetase functions in the citric acid cycle (TCA), coupling the hydrolysis of succinyl-CoA to the synthesis of either ATP or GTP and thus represents the only step of substrate-level phosphorylation in the TCA. The beta subunit provides nucleotide specificity of the enzyme and binds the substrate succinate, while the binding sites for coenzyme A and phosphate are found in the alpha subunit.</text>
</comment>
<comment type="catalytic activity">
    <reaction evidence="1">
        <text>succinate + ATP + CoA = succinyl-CoA + ADP + phosphate</text>
        <dbReference type="Rhea" id="RHEA:17661"/>
        <dbReference type="ChEBI" id="CHEBI:30031"/>
        <dbReference type="ChEBI" id="CHEBI:30616"/>
        <dbReference type="ChEBI" id="CHEBI:43474"/>
        <dbReference type="ChEBI" id="CHEBI:57287"/>
        <dbReference type="ChEBI" id="CHEBI:57292"/>
        <dbReference type="ChEBI" id="CHEBI:456216"/>
        <dbReference type="EC" id="6.2.1.5"/>
    </reaction>
    <physiologicalReaction direction="right-to-left" evidence="1">
        <dbReference type="Rhea" id="RHEA:17663"/>
    </physiologicalReaction>
</comment>
<comment type="catalytic activity">
    <reaction evidence="1">
        <text>GTP + succinate + CoA = succinyl-CoA + GDP + phosphate</text>
        <dbReference type="Rhea" id="RHEA:22120"/>
        <dbReference type="ChEBI" id="CHEBI:30031"/>
        <dbReference type="ChEBI" id="CHEBI:37565"/>
        <dbReference type="ChEBI" id="CHEBI:43474"/>
        <dbReference type="ChEBI" id="CHEBI:57287"/>
        <dbReference type="ChEBI" id="CHEBI:57292"/>
        <dbReference type="ChEBI" id="CHEBI:58189"/>
    </reaction>
    <physiologicalReaction direction="right-to-left" evidence="1">
        <dbReference type="Rhea" id="RHEA:22122"/>
    </physiologicalReaction>
</comment>
<comment type="cofactor">
    <cofactor evidence="1">
        <name>Mg(2+)</name>
        <dbReference type="ChEBI" id="CHEBI:18420"/>
    </cofactor>
    <text evidence="1">Binds 1 Mg(2+) ion per subunit.</text>
</comment>
<comment type="pathway">
    <text evidence="1">Carbohydrate metabolism; tricarboxylic acid cycle; succinate from succinyl-CoA (ligase route): step 1/1.</text>
</comment>
<comment type="subunit">
    <text evidence="1">Heterotetramer of two alpha and two beta subunits.</text>
</comment>
<comment type="similarity">
    <text evidence="1">Belongs to the succinate/malate CoA ligase beta subunit family.</text>
</comment>
<dbReference type="EC" id="6.2.1.5" evidence="1"/>
<dbReference type="EMBL" id="CP001022">
    <property type="protein sequence ID" value="ACB61343.1"/>
    <property type="molecule type" value="Genomic_DNA"/>
</dbReference>
<dbReference type="RefSeq" id="WP_012370761.1">
    <property type="nucleotide sequence ID" value="NC_010556.1"/>
</dbReference>
<dbReference type="SMR" id="B1YIL7"/>
<dbReference type="STRING" id="262543.Exig_1891"/>
<dbReference type="KEGG" id="esi:Exig_1891"/>
<dbReference type="eggNOG" id="COG0045">
    <property type="taxonomic scope" value="Bacteria"/>
</dbReference>
<dbReference type="HOGENOM" id="CLU_037430_0_2_9"/>
<dbReference type="OrthoDB" id="9802602at2"/>
<dbReference type="UniPathway" id="UPA00223">
    <property type="reaction ID" value="UER00999"/>
</dbReference>
<dbReference type="Proteomes" id="UP000001681">
    <property type="component" value="Chromosome"/>
</dbReference>
<dbReference type="GO" id="GO:0005829">
    <property type="term" value="C:cytosol"/>
    <property type="evidence" value="ECO:0007669"/>
    <property type="project" value="TreeGrafter"/>
</dbReference>
<dbReference type="GO" id="GO:0042709">
    <property type="term" value="C:succinate-CoA ligase complex"/>
    <property type="evidence" value="ECO:0007669"/>
    <property type="project" value="TreeGrafter"/>
</dbReference>
<dbReference type="GO" id="GO:0005524">
    <property type="term" value="F:ATP binding"/>
    <property type="evidence" value="ECO:0007669"/>
    <property type="project" value="UniProtKB-UniRule"/>
</dbReference>
<dbReference type="GO" id="GO:0000287">
    <property type="term" value="F:magnesium ion binding"/>
    <property type="evidence" value="ECO:0007669"/>
    <property type="project" value="UniProtKB-UniRule"/>
</dbReference>
<dbReference type="GO" id="GO:0004775">
    <property type="term" value="F:succinate-CoA ligase (ADP-forming) activity"/>
    <property type="evidence" value="ECO:0007669"/>
    <property type="project" value="UniProtKB-UniRule"/>
</dbReference>
<dbReference type="GO" id="GO:0004776">
    <property type="term" value="F:succinate-CoA ligase (GDP-forming) activity"/>
    <property type="evidence" value="ECO:0007669"/>
    <property type="project" value="RHEA"/>
</dbReference>
<dbReference type="GO" id="GO:0006104">
    <property type="term" value="P:succinyl-CoA metabolic process"/>
    <property type="evidence" value="ECO:0007669"/>
    <property type="project" value="TreeGrafter"/>
</dbReference>
<dbReference type="GO" id="GO:0006099">
    <property type="term" value="P:tricarboxylic acid cycle"/>
    <property type="evidence" value="ECO:0007669"/>
    <property type="project" value="UniProtKB-UniRule"/>
</dbReference>
<dbReference type="FunFam" id="3.30.1490.20:FF:000002">
    <property type="entry name" value="Succinate--CoA ligase [ADP-forming] subunit beta"/>
    <property type="match status" value="1"/>
</dbReference>
<dbReference type="FunFam" id="3.30.470.20:FF:000002">
    <property type="entry name" value="Succinate--CoA ligase [ADP-forming] subunit beta"/>
    <property type="match status" value="1"/>
</dbReference>
<dbReference type="FunFam" id="3.40.50.261:FF:000001">
    <property type="entry name" value="Succinate--CoA ligase [ADP-forming] subunit beta"/>
    <property type="match status" value="1"/>
</dbReference>
<dbReference type="Gene3D" id="3.30.1490.20">
    <property type="entry name" value="ATP-grasp fold, A domain"/>
    <property type="match status" value="1"/>
</dbReference>
<dbReference type="Gene3D" id="3.30.470.20">
    <property type="entry name" value="ATP-grasp fold, B domain"/>
    <property type="match status" value="1"/>
</dbReference>
<dbReference type="Gene3D" id="3.40.50.261">
    <property type="entry name" value="Succinyl-CoA synthetase domains"/>
    <property type="match status" value="1"/>
</dbReference>
<dbReference type="HAMAP" id="MF_00558">
    <property type="entry name" value="Succ_CoA_beta"/>
    <property type="match status" value="1"/>
</dbReference>
<dbReference type="InterPro" id="IPR011761">
    <property type="entry name" value="ATP-grasp"/>
</dbReference>
<dbReference type="InterPro" id="IPR013650">
    <property type="entry name" value="ATP-grasp_succ-CoA_synth-type"/>
</dbReference>
<dbReference type="InterPro" id="IPR013815">
    <property type="entry name" value="ATP_grasp_subdomain_1"/>
</dbReference>
<dbReference type="InterPro" id="IPR005811">
    <property type="entry name" value="SUCC_ACL_C"/>
</dbReference>
<dbReference type="InterPro" id="IPR005809">
    <property type="entry name" value="Succ_CoA_ligase-like_bsu"/>
</dbReference>
<dbReference type="InterPro" id="IPR016102">
    <property type="entry name" value="Succinyl-CoA_synth-like"/>
</dbReference>
<dbReference type="NCBIfam" id="NF001913">
    <property type="entry name" value="PRK00696.1"/>
    <property type="match status" value="1"/>
</dbReference>
<dbReference type="NCBIfam" id="TIGR01016">
    <property type="entry name" value="sucCoAbeta"/>
    <property type="match status" value="1"/>
</dbReference>
<dbReference type="PANTHER" id="PTHR11815:SF10">
    <property type="entry name" value="SUCCINATE--COA LIGASE [GDP-FORMING] SUBUNIT BETA, MITOCHONDRIAL"/>
    <property type="match status" value="1"/>
</dbReference>
<dbReference type="PANTHER" id="PTHR11815">
    <property type="entry name" value="SUCCINYL-COA SYNTHETASE BETA CHAIN"/>
    <property type="match status" value="1"/>
</dbReference>
<dbReference type="Pfam" id="PF08442">
    <property type="entry name" value="ATP-grasp_2"/>
    <property type="match status" value="1"/>
</dbReference>
<dbReference type="Pfam" id="PF00549">
    <property type="entry name" value="Ligase_CoA"/>
    <property type="match status" value="1"/>
</dbReference>
<dbReference type="PIRSF" id="PIRSF001554">
    <property type="entry name" value="SucCS_beta"/>
    <property type="match status" value="1"/>
</dbReference>
<dbReference type="SUPFAM" id="SSF56059">
    <property type="entry name" value="Glutathione synthetase ATP-binding domain-like"/>
    <property type="match status" value="1"/>
</dbReference>
<dbReference type="SUPFAM" id="SSF52210">
    <property type="entry name" value="Succinyl-CoA synthetase domains"/>
    <property type="match status" value="1"/>
</dbReference>
<dbReference type="PROSITE" id="PS50975">
    <property type="entry name" value="ATP_GRASP"/>
    <property type="match status" value="1"/>
</dbReference>
<organism>
    <name type="scientific">Exiguobacterium sibiricum (strain DSM 17290 / CCUG 55495 / CIP 109462 / JCM 13490 / 255-15)</name>
    <dbReference type="NCBI Taxonomy" id="262543"/>
    <lineage>
        <taxon>Bacteria</taxon>
        <taxon>Bacillati</taxon>
        <taxon>Bacillota</taxon>
        <taxon>Bacilli</taxon>
        <taxon>Bacillales</taxon>
        <taxon>Bacillales Family XII. Incertae Sedis</taxon>
        <taxon>Exiguobacterium</taxon>
    </lineage>
</organism>
<accession>B1YIL7</accession>
<evidence type="ECO:0000255" key="1">
    <source>
        <dbReference type="HAMAP-Rule" id="MF_00558"/>
    </source>
</evidence>
<proteinExistence type="inferred from homology"/>
<reference key="1">
    <citation type="submission" date="2008-04" db="EMBL/GenBank/DDBJ databases">
        <title>Complete sequence of chromosome of Exiguobacterium sibiricum 255-15.</title>
        <authorList>
            <consortium name="US DOE Joint Genome Institute"/>
            <person name="Copeland A."/>
            <person name="Lucas S."/>
            <person name="Lapidus A."/>
            <person name="Glavina del Rio T."/>
            <person name="Dalin E."/>
            <person name="Tice H."/>
            <person name="Bruce D."/>
            <person name="Goodwin L."/>
            <person name="Pitluck S."/>
            <person name="Kiss H."/>
            <person name="Chertkov O."/>
            <person name="Monk C."/>
            <person name="Brettin T."/>
            <person name="Detter J.C."/>
            <person name="Han C."/>
            <person name="Kuske C.R."/>
            <person name="Schmutz J."/>
            <person name="Larimer F."/>
            <person name="Land M."/>
            <person name="Hauser L."/>
            <person name="Kyrpides N."/>
            <person name="Mikhailova N."/>
            <person name="Vishnivetskaya T."/>
            <person name="Rodrigues D.F."/>
            <person name="Gilichinsky D."/>
            <person name="Tiedje J."/>
            <person name="Richardson P."/>
        </authorList>
    </citation>
    <scope>NUCLEOTIDE SEQUENCE [LARGE SCALE GENOMIC DNA]</scope>
    <source>
        <strain>DSM 17290 / CCUG 55495 / CIP 109462 / JCM 13490 / 255-15</strain>
    </source>
</reference>
<keyword id="KW-0067">ATP-binding</keyword>
<keyword id="KW-0436">Ligase</keyword>
<keyword id="KW-0460">Magnesium</keyword>
<keyword id="KW-0479">Metal-binding</keyword>
<keyword id="KW-0547">Nucleotide-binding</keyword>
<keyword id="KW-1185">Reference proteome</keyword>
<keyword id="KW-0816">Tricarboxylic acid cycle</keyword>
<name>SUCC_EXIS2</name>
<gene>
    <name evidence="1" type="primary">sucC</name>
    <name type="ordered locus">Exig_1891</name>
</gene>
<feature type="chain" id="PRO_1000129190" description="Succinate--CoA ligase [ADP-forming] subunit beta">
    <location>
        <begin position="1"/>
        <end position="386"/>
    </location>
</feature>
<feature type="domain" description="ATP-grasp" evidence="1">
    <location>
        <begin position="9"/>
        <end position="244"/>
    </location>
</feature>
<feature type="binding site" evidence="1">
    <location>
        <position position="46"/>
    </location>
    <ligand>
        <name>ATP</name>
        <dbReference type="ChEBI" id="CHEBI:30616"/>
    </ligand>
</feature>
<feature type="binding site" evidence="1">
    <location>
        <begin position="53"/>
        <end position="55"/>
    </location>
    <ligand>
        <name>ATP</name>
        <dbReference type="ChEBI" id="CHEBI:30616"/>
    </ligand>
</feature>
<feature type="binding site" evidence="1">
    <location>
        <position position="99"/>
    </location>
    <ligand>
        <name>ATP</name>
        <dbReference type="ChEBI" id="CHEBI:30616"/>
    </ligand>
</feature>
<feature type="binding site" evidence="1">
    <location>
        <position position="102"/>
    </location>
    <ligand>
        <name>ATP</name>
        <dbReference type="ChEBI" id="CHEBI:30616"/>
    </ligand>
</feature>
<feature type="binding site" evidence="1">
    <location>
        <position position="107"/>
    </location>
    <ligand>
        <name>ATP</name>
        <dbReference type="ChEBI" id="CHEBI:30616"/>
    </ligand>
</feature>
<feature type="binding site" evidence="1">
    <location>
        <position position="199"/>
    </location>
    <ligand>
        <name>Mg(2+)</name>
        <dbReference type="ChEBI" id="CHEBI:18420"/>
    </ligand>
</feature>
<feature type="binding site" evidence="1">
    <location>
        <position position="213"/>
    </location>
    <ligand>
        <name>Mg(2+)</name>
        <dbReference type="ChEBI" id="CHEBI:18420"/>
    </ligand>
</feature>
<feature type="binding site" evidence="1">
    <location>
        <position position="264"/>
    </location>
    <ligand>
        <name>substrate</name>
        <note>ligand shared with subunit alpha</note>
    </ligand>
</feature>
<feature type="binding site" evidence="1">
    <location>
        <begin position="321"/>
        <end position="323"/>
    </location>
    <ligand>
        <name>substrate</name>
        <note>ligand shared with subunit alpha</note>
    </ligand>
</feature>
<sequence>MNVHEYQAKELLRSYGVPVPNGIAAFTVEEAVDAAEQLSGPIKVVKAQIHAGGRGKAGGVKLAKSQEEVKEFATELLGKTLVTHQTGPEGKVIQRLLVEEGCAIDKEYYLGIVLDRVTGRVVIMGSSEGGMDIEEVAEATPEKIIKEVVDPAVGLQAFQARKLAFAMGVPVKLVNKFVGMVTKLYTFFVDKDCSIAEINPLVTTKDGDVLALDAKLNFDSNALYRHADVVALRDETEEDPREVEASKNDLNYIALDGNIGCLVNGAGLAMATMDIIKHFSGDPANFLDVGGGATKEKVTEAFKLILSDENVKGIFVNIFGGIMKCDVIAEGIVAATKEVGLELPLVVRLEGTNVDAGKQILKDSGLAITAATSMADGAEKIAALVK</sequence>
<protein>
    <recommendedName>
        <fullName evidence="1">Succinate--CoA ligase [ADP-forming] subunit beta</fullName>
        <ecNumber evidence="1">6.2.1.5</ecNumber>
    </recommendedName>
    <alternativeName>
        <fullName evidence="1">Succinyl-CoA synthetase subunit beta</fullName>
        <shortName evidence="1">SCS-beta</shortName>
    </alternativeName>
</protein>